<gene>
    <name type="primary">ygbA</name>
    <name type="ordered locus">b2732</name>
    <name type="ordered locus">JW2702</name>
</gene>
<keyword id="KW-1185">Reference proteome</keyword>
<proteinExistence type="predicted"/>
<reference key="1">
    <citation type="journal article" date="1991" name="J. Bacteriol.">
        <title>The Escherichia coli fdv gene probably encodes mutS and is located at minute 58.8 adjacent to the hyc-hyp gene cluster.</title>
        <authorList>
            <person name="Schlensog V."/>
            <person name="Boeck A."/>
        </authorList>
    </citation>
    <scope>NUCLEOTIDE SEQUENCE [GENOMIC DNA]</scope>
</reference>
<reference key="2">
    <citation type="journal article" date="1997" name="Science">
        <title>The complete genome sequence of Escherichia coli K-12.</title>
        <authorList>
            <person name="Blattner F.R."/>
            <person name="Plunkett G. III"/>
            <person name="Bloch C.A."/>
            <person name="Perna N.T."/>
            <person name="Burland V."/>
            <person name="Riley M."/>
            <person name="Collado-Vides J."/>
            <person name="Glasner J.D."/>
            <person name="Rode C.K."/>
            <person name="Mayhew G.F."/>
            <person name="Gregor J."/>
            <person name="Davis N.W."/>
            <person name="Kirkpatrick H.A."/>
            <person name="Goeden M.A."/>
            <person name="Rose D.J."/>
            <person name="Mau B."/>
            <person name="Shao Y."/>
        </authorList>
    </citation>
    <scope>NUCLEOTIDE SEQUENCE [LARGE SCALE GENOMIC DNA]</scope>
    <source>
        <strain>K12 / MG1655 / ATCC 47076</strain>
    </source>
</reference>
<reference key="3">
    <citation type="journal article" date="2006" name="Mol. Syst. Biol.">
        <title>Highly accurate genome sequences of Escherichia coli K-12 strains MG1655 and W3110.</title>
        <authorList>
            <person name="Hayashi K."/>
            <person name="Morooka N."/>
            <person name="Yamamoto Y."/>
            <person name="Fujita K."/>
            <person name="Isono K."/>
            <person name="Choi S."/>
            <person name="Ohtsubo E."/>
            <person name="Baba T."/>
            <person name="Wanner B.L."/>
            <person name="Mori H."/>
            <person name="Horiuchi T."/>
        </authorList>
    </citation>
    <scope>NUCLEOTIDE SEQUENCE [LARGE SCALE GENOMIC DNA]</scope>
    <source>
        <strain>K12 / W3110 / ATCC 27325 / DSM 5911</strain>
    </source>
</reference>
<organism>
    <name type="scientific">Escherichia coli (strain K12)</name>
    <dbReference type="NCBI Taxonomy" id="83333"/>
    <lineage>
        <taxon>Bacteria</taxon>
        <taxon>Pseudomonadati</taxon>
        <taxon>Pseudomonadota</taxon>
        <taxon>Gammaproteobacteria</taxon>
        <taxon>Enterobacterales</taxon>
        <taxon>Enterobacteriaceae</taxon>
        <taxon>Escherichia</taxon>
    </lineage>
</organism>
<sequence>MSGKRISREKLTIKKMIDLYQAKCPQASAEPEHYEALFVYAQKRLDKCVFGEEKPACKQCPVHCYQPAKREEMKQIMRWAGPRMLWRHPILTVRHLIDDKRPVPELPEKYRPKKPHE</sequence>
<accession>P25728</accession>
<accession>Q2MA97</accession>
<protein>
    <recommendedName>
        <fullName>Uncharacterized protein YgbA</fullName>
    </recommendedName>
</protein>
<dbReference type="EMBL" id="M64730">
    <property type="status" value="NOT_ANNOTATED_CDS"/>
    <property type="molecule type" value="Genomic_DNA"/>
</dbReference>
<dbReference type="EMBL" id="U29579">
    <property type="protein sequence ID" value="AAA69242.1"/>
    <property type="molecule type" value="Genomic_DNA"/>
</dbReference>
<dbReference type="EMBL" id="U00096">
    <property type="protein sequence ID" value="AAC75774.1"/>
    <property type="molecule type" value="Genomic_DNA"/>
</dbReference>
<dbReference type="EMBL" id="AP009048">
    <property type="protein sequence ID" value="BAE76809.1"/>
    <property type="molecule type" value="Genomic_DNA"/>
</dbReference>
<dbReference type="PIR" id="H65053">
    <property type="entry name" value="H65053"/>
</dbReference>
<dbReference type="RefSeq" id="NP_417212.1">
    <property type="nucleotide sequence ID" value="NC_000913.3"/>
</dbReference>
<dbReference type="RefSeq" id="WP_000015497.1">
    <property type="nucleotide sequence ID" value="NZ_LN832404.1"/>
</dbReference>
<dbReference type="BioGRID" id="4261422">
    <property type="interactions" value="11"/>
</dbReference>
<dbReference type="FunCoup" id="P25728">
    <property type="interactions" value="87"/>
</dbReference>
<dbReference type="IntAct" id="P25728">
    <property type="interactions" value="5"/>
</dbReference>
<dbReference type="STRING" id="511145.b2732"/>
<dbReference type="PaxDb" id="511145-b2732"/>
<dbReference type="EnsemblBacteria" id="AAC75774">
    <property type="protein sequence ID" value="AAC75774"/>
    <property type="gene ID" value="b2732"/>
</dbReference>
<dbReference type="GeneID" id="947187"/>
<dbReference type="KEGG" id="ecj:JW2702"/>
<dbReference type="KEGG" id="eco:b2732"/>
<dbReference type="KEGG" id="ecoc:C3026_15030"/>
<dbReference type="PATRIC" id="fig|511145.12.peg.2824"/>
<dbReference type="EchoBASE" id="EB1264"/>
<dbReference type="eggNOG" id="ENOG5032ZJK">
    <property type="taxonomic scope" value="Bacteria"/>
</dbReference>
<dbReference type="HOGENOM" id="CLU_138593_1_0_6"/>
<dbReference type="InParanoid" id="P25728"/>
<dbReference type="OMA" id="CPIHCYK"/>
<dbReference type="OrthoDB" id="5344095at2"/>
<dbReference type="PhylomeDB" id="P25728"/>
<dbReference type="BioCyc" id="EcoCyc:EG11287-MONOMER"/>
<dbReference type="PRO" id="PR:P25728"/>
<dbReference type="Proteomes" id="UP000000625">
    <property type="component" value="Chromosome"/>
</dbReference>
<dbReference type="InterPro" id="IPR020483">
    <property type="entry name" value="Uncharacterised_YgbA"/>
</dbReference>
<dbReference type="NCBIfam" id="NF007713">
    <property type="entry name" value="PRK10410.1-1"/>
    <property type="match status" value="1"/>
</dbReference>
<dbReference type="NCBIfam" id="NF007714">
    <property type="entry name" value="PRK10410.1-2"/>
    <property type="match status" value="1"/>
</dbReference>
<dbReference type="NCBIfam" id="NF007716">
    <property type="entry name" value="PRK10410.1-4"/>
    <property type="match status" value="1"/>
</dbReference>
<dbReference type="Pfam" id="PF11756">
    <property type="entry name" value="YgbA_NO"/>
    <property type="match status" value="1"/>
</dbReference>
<name>YGBA_ECOLI</name>
<feature type="chain" id="PRO_0000169310" description="Uncharacterized protein YgbA">
    <location>
        <begin position="1"/>
        <end position="117"/>
    </location>
</feature>